<evidence type="ECO:0000255" key="1">
    <source>
        <dbReference type="HAMAP-Rule" id="MF_00052"/>
    </source>
</evidence>
<evidence type="ECO:0000255" key="2">
    <source>
        <dbReference type="PROSITE-ProRule" id="PRU01319"/>
    </source>
</evidence>
<gene>
    <name evidence="1" type="primary">rnhB</name>
    <name type="ordered locus">TON_0770</name>
</gene>
<feature type="chain" id="PRO_1000116852" description="Ribonuclease HII">
    <location>
        <begin position="1"/>
        <end position="227"/>
    </location>
</feature>
<feature type="domain" description="RNase H type-2" evidence="2">
    <location>
        <begin position="1"/>
        <end position="210"/>
    </location>
</feature>
<feature type="binding site" evidence="1">
    <location>
        <position position="7"/>
    </location>
    <ligand>
        <name>a divalent metal cation</name>
        <dbReference type="ChEBI" id="CHEBI:60240"/>
    </ligand>
</feature>
<feature type="binding site" evidence="1">
    <location>
        <position position="8"/>
    </location>
    <ligand>
        <name>a divalent metal cation</name>
        <dbReference type="ChEBI" id="CHEBI:60240"/>
    </ligand>
</feature>
<feature type="binding site" evidence="1">
    <location>
        <position position="105"/>
    </location>
    <ligand>
        <name>a divalent metal cation</name>
        <dbReference type="ChEBI" id="CHEBI:60240"/>
    </ligand>
</feature>
<proteinExistence type="inferred from homology"/>
<sequence length="227" mass="25879">MKLAGIDEAGRGPVLGPMVIAAVVVDEGNVPKLEELGVKDSKKLTPKRRERLFDEIVQLLDDYVILELWPEEIDSREGTLNEFEVENFVKALNSLKVKPDVVYIDAADVKEARFGEEIKAKLDFEADIIAEHKADDKFVPVSAASILAKVARDRAIEKLKDQYGEIGSGYPSDPRTRTFLEEYYRKHGEFPPIVRRTWKTLKKIEEKLAKEMKKRRGQTSLEEFFGK</sequence>
<name>RNH2_THEON</name>
<keyword id="KW-0963">Cytoplasm</keyword>
<keyword id="KW-0255">Endonuclease</keyword>
<keyword id="KW-0378">Hydrolase</keyword>
<keyword id="KW-0464">Manganese</keyword>
<keyword id="KW-0479">Metal-binding</keyword>
<keyword id="KW-0540">Nuclease</keyword>
<protein>
    <recommendedName>
        <fullName evidence="1">Ribonuclease HII</fullName>
        <shortName evidence="1">RNase HII</shortName>
        <ecNumber evidence="1">3.1.26.4</ecNumber>
    </recommendedName>
</protein>
<comment type="function">
    <text evidence="1">Endonuclease that specifically degrades the RNA of RNA-DNA hybrids.</text>
</comment>
<comment type="catalytic activity">
    <reaction evidence="1">
        <text>Endonucleolytic cleavage to 5'-phosphomonoester.</text>
        <dbReference type="EC" id="3.1.26.4"/>
    </reaction>
</comment>
<comment type="cofactor">
    <cofactor evidence="1">
        <name>Mn(2+)</name>
        <dbReference type="ChEBI" id="CHEBI:29035"/>
    </cofactor>
    <cofactor evidence="1">
        <name>Mg(2+)</name>
        <dbReference type="ChEBI" id="CHEBI:18420"/>
    </cofactor>
    <text evidence="1">Manganese or magnesium. Binds 1 divalent metal ion per monomer in the absence of substrate. May bind a second metal ion after substrate binding.</text>
</comment>
<comment type="subcellular location">
    <subcellularLocation>
        <location evidence="1">Cytoplasm</location>
    </subcellularLocation>
</comment>
<comment type="similarity">
    <text evidence="1">Belongs to the RNase HII family.</text>
</comment>
<accession>B6YVT5</accession>
<reference key="1">
    <citation type="journal article" date="2008" name="J. Bacteriol.">
        <title>The complete genome sequence of Thermococcus onnurineus NA1 reveals a mixed heterotrophic and carboxydotrophic metabolism.</title>
        <authorList>
            <person name="Lee H.S."/>
            <person name="Kang S.G."/>
            <person name="Bae S.S."/>
            <person name="Lim J.K."/>
            <person name="Cho Y."/>
            <person name="Kim Y.J."/>
            <person name="Jeon J.H."/>
            <person name="Cha S.-S."/>
            <person name="Kwon K.K."/>
            <person name="Kim H.-T."/>
            <person name="Park C.-J."/>
            <person name="Lee H.-W."/>
            <person name="Kim S.I."/>
            <person name="Chun J."/>
            <person name="Colwell R.R."/>
            <person name="Kim S.-J."/>
            <person name="Lee J.-H."/>
        </authorList>
    </citation>
    <scope>NUCLEOTIDE SEQUENCE [LARGE SCALE GENOMIC DNA]</scope>
    <source>
        <strain>NA1</strain>
    </source>
</reference>
<organism>
    <name type="scientific">Thermococcus onnurineus (strain NA1)</name>
    <dbReference type="NCBI Taxonomy" id="523850"/>
    <lineage>
        <taxon>Archaea</taxon>
        <taxon>Methanobacteriati</taxon>
        <taxon>Methanobacteriota</taxon>
        <taxon>Thermococci</taxon>
        <taxon>Thermococcales</taxon>
        <taxon>Thermococcaceae</taxon>
        <taxon>Thermococcus</taxon>
    </lineage>
</organism>
<dbReference type="EC" id="3.1.26.4" evidence="1"/>
<dbReference type="EMBL" id="CP000855">
    <property type="protein sequence ID" value="ACJ16258.1"/>
    <property type="molecule type" value="Genomic_DNA"/>
</dbReference>
<dbReference type="RefSeq" id="WP_012571730.1">
    <property type="nucleotide sequence ID" value="NC_011529.1"/>
</dbReference>
<dbReference type="SMR" id="B6YVT5"/>
<dbReference type="STRING" id="523850.TON_0770"/>
<dbReference type="GeneID" id="7017073"/>
<dbReference type="KEGG" id="ton:TON_0770"/>
<dbReference type="PATRIC" id="fig|523850.10.peg.775"/>
<dbReference type="eggNOG" id="arCOG04121">
    <property type="taxonomic scope" value="Archaea"/>
</dbReference>
<dbReference type="HOGENOM" id="CLU_036532_0_4_2"/>
<dbReference type="OrthoDB" id="33866at2157"/>
<dbReference type="Proteomes" id="UP000002727">
    <property type="component" value="Chromosome"/>
</dbReference>
<dbReference type="GO" id="GO:0005737">
    <property type="term" value="C:cytoplasm"/>
    <property type="evidence" value="ECO:0007669"/>
    <property type="project" value="UniProtKB-SubCell"/>
</dbReference>
<dbReference type="GO" id="GO:0032299">
    <property type="term" value="C:ribonuclease H2 complex"/>
    <property type="evidence" value="ECO:0007669"/>
    <property type="project" value="TreeGrafter"/>
</dbReference>
<dbReference type="GO" id="GO:0030145">
    <property type="term" value="F:manganese ion binding"/>
    <property type="evidence" value="ECO:0007669"/>
    <property type="project" value="UniProtKB-UniRule"/>
</dbReference>
<dbReference type="GO" id="GO:0003723">
    <property type="term" value="F:RNA binding"/>
    <property type="evidence" value="ECO:0007669"/>
    <property type="project" value="InterPro"/>
</dbReference>
<dbReference type="GO" id="GO:0004523">
    <property type="term" value="F:RNA-DNA hybrid ribonuclease activity"/>
    <property type="evidence" value="ECO:0007669"/>
    <property type="project" value="UniProtKB-UniRule"/>
</dbReference>
<dbReference type="GO" id="GO:0043137">
    <property type="term" value="P:DNA replication, removal of RNA primer"/>
    <property type="evidence" value="ECO:0007669"/>
    <property type="project" value="TreeGrafter"/>
</dbReference>
<dbReference type="GO" id="GO:0006298">
    <property type="term" value="P:mismatch repair"/>
    <property type="evidence" value="ECO:0007669"/>
    <property type="project" value="TreeGrafter"/>
</dbReference>
<dbReference type="CDD" id="cd07180">
    <property type="entry name" value="RNase_HII_archaea_like"/>
    <property type="match status" value="1"/>
</dbReference>
<dbReference type="FunFam" id="1.10.10.460:FF:000001">
    <property type="entry name" value="Ribonuclease"/>
    <property type="match status" value="1"/>
</dbReference>
<dbReference type="FunFam" id="3.30.420.10:FF:000139">
    <property type="entry name" value="Ribonuclease HII"/>
    <property type="match status" value="1"/>
</dbReference>
<dbReference type="Gene3D" id="3.30.420.10">
    <property type="entry name" value="Ribonuclease H-like superfamily/Ribonuclease H"/>
    <property type="match status" value="1"/>
</dbReference>
<dbReference type="Gene3D" id="1.10.10.460">
    <property type="entry name" value="Ribonuclease hii. Domain 2"/>
    <property type="match status" value="1"/>
</dbReference>
<dbReference type="HAMAP" id="MF_00052_A">
    <property type="entry name" value="RNase_HII_A"/>
    <property type="match status" value="1"/>
</dbReference>
<dbReference type="InterPro" id="IPR004649">
    <property type="entry name" value="RNase_H2_suA"/>
</dbReference>
<dbReference type="InterPro" id="IPR001352">
    <property type="entry name" value="RNase_HII/HIII"/>
</dbReference>
<dbReference type="InterPro" id="IPR024567">
    <property type="entry name" value="RNase_HII/HIII_dom"/>
</dbReference>
<dbReference type="InterPro" id="IPR020787">
    <property type="entry name" value="RNase_HII_arc"/>
</dbReference>
<dbReference type="InterPro" id="IPR023160">
    <property type="entry name" value="RNase_HII_hlx-loop-hlx_cap_dom"/>
</dbReference>
<dbReference type="InterPro" id="IPR012337">
    <property type="entry name" value="RNaseH-like_sf"/>
</dbReference>
<dbReference type="InterPro" id="IPR036397">
    <property type="entry name" value="RNaseH_sf"/>
</dbReference>
<dbReference type="NCBIfam" id="TIGR00729">
    <property type="entry name" value="ribonuclease HII"/>
    <property type="match status" value="1"/>
</dbReference>
<dbReference type="PANTHER" id="PTHR10954:SF23">
    <property type="entry name" value="RIBONUCLEASE"/>
    <property type="match status" value="1"/>
</dbReference>
<dbReference type="PANTHER" id="PTHR10954">
    <property type="entry name" value="RIBONUCLEASE H2 SUBUNIT A"/>
    <property type="match status" value="1"/>
</dbReference>
<dbReference type="Pfam" id="PF01351">
    <property type="entry name" value="RNase_HII"/>
    <property type="match status" value="1"/>
</dbReference>
<dbReference type="SUPFAM" id="SSF53098">
    <property type="entry name" value="Ribonuclease H-like"/>
    <property type="match status" value="1"/>
</dbReference>
<dbReference type="PROSITE" id="PS51975">
    <property type="entry name" value="RNASE_H_2"/>
    <property type="match status" value="1"/>
</dbReference>